<gene>
    <name type="primary">NGF</name>
    <name type="synonym">NGFB</name>
</gene>
<dbReference type="EMBL" id="AY665218">
    <property type="protein sequence ID" value="AAV74256.1"/>
    <property type="status" value="ALT_INIT"/>
    <property type="molecule type" value="mRNA"/>
</dbReference>
<dbReference type="RefSeq" id="XP_003933556.1">
    <property type="nucleotide sequence ID" value="XM_003933507.2"/>
</dbReference>
<dbReference type="RefSeq" id="XP_010342361.1">
    <property type="nucleotide sequence ID" value="XM_010344059.1"/>
</dbReference>
<dbReference type="SMR" id="Q5ISB0"/>
<dbReference type="STRING" id="39432.ENSSBOP00000026931"/>
<dbReference type="GlyCosmos" id="Q5ISB0">
    <property type="glycosylation" value="3 sites, No reported glycans"/>
</dbReference>
<dbReference type="GeneID" id="101038561"/>
<dbReference type="KEGG" id="sbq:101038561"/>
<dbReference type="CTD" id="4803"/>
<dbReference type="OrthoDB" id="68978at9443"/>
<dbReference type="Proteomes" id="UP000233220">
    <property type="component" value="Whole Genome Shotgun Assembly"/>
</dbReference>
<dbReference type="GO" id="GO:0030424">
    <property type="term" value="C:axon"/>
    <property type="evidence" value="ECO:0007669"/>
    <property type="project" value="TreeGrafter"/>
</dbReference>
<dbReference type="GO" id="GO:0030425">
    <property type="term" value="C:dendrite"/>
    <property type="evidence" value="ECO:0007669"/>
    <property type="project" value="TreeGrafter"/>
</dbReference>
<dbReference type="GO" id="GO:0005615">
    <property type="term" value="C:extracellular space"/>
    <property type="evidence" value="ECO:0007669"/>
    <property type="project" value="TreeGrafter"/>
</dbReference>
<dbReference type="GO" id="GO:0008021">
    <property type="term" value="C:synaptic vesicle"/>
    <property type="evidence" value="ECO:0007669"/>
    <property type="project" value="TreeGrafter"/>
</dbReference>
<dbReference type="GO" id="GO:0008083">
    <property type="term" value="F:growth factor activity"/>
    <property type="evidence" value="ECO:0007669"/>
    <property type="project" value="UniProtKB-KW"/>
</dbReference>
<dbReference type="GO" id="GO:0008191">
    <property type="term" value="F:metalloendopeptidase inhibitor activity"/>
    <property type="evidence" value="ECO:0000250"/>
    <property type="project" value="UniProtKB"/>
</dbReference>
<dbReference type="GO" id="GO:0005163">
    <property type="term" value="F:nerve growth factor receptor binding"/>
    <property type="evidence" value="ECO:0007669"/>
    <property type="project" value="TreeGrafter"/>
</dbReference>
<dbReference type="GO" id="GO:0007169">
    <property type="term" value="P:cell surface receptor protein tyrosine kinase signaling pathway"/>
    <property type="evidence" value="ECO:0007669"/>
    <property type="project" value="TreeGrafter"/>
</dbReference>
<dbReference type="GO" id="GO:0050804">
    <property type="term" value="P:modulation of chemical synaptic transmission"/>
    <property type="evidence" value="ECO:0007669"/>
    <property type="project" value="TreeGrafter"/>
</dbReference>
<dbReference type="GO" id="GO:0043524">
    <property type="term" value="P:negative regulation of neuron apoptotic process"/>
    <property type="evidence" value="ECO:0007669"/>
    <property type="project" value="TreeGrafter"/>
</dbReference>
<dbReference type="GO" id="GO:0021675">
    <property type="term" value="P:nerve development"/>
    <property type="evidence" value="ECO:0007669"/>
    <property type="project" value="TreeGrafter"/>
</dbReference>
<dbReference type="GO" id="GO:0038180">
    <property type="term" value="P:nerve growth factor signaling pathway"/>
    <property type="evidence" value="ECO:0007669"/>
    <property type="project" value="TreeGrafter"/>
</dbReference>
<dbReference type="GO" id="GO:0048812">
    <property type="term" value="P:neuron projection morphogenesis"/>
    <property type="evidence" value="ECO:0007669"/>
    <property type="project" value="TreeGrafter"/>
</dbReference>
<dbReference type="FunFam" id="2.10.90.10:FF:000002">
    <property type="entry name" value="Brain-derived neurotrophic factor"/>
    <property type="match status" value="1"/>
</dbReference>
<dbReference type="Gene3D" id="2.10.90.10">
    <property type="entry name" value="Cystine-knot cytokines"/>
    <property type="match status" value="1"/>
</dbReference>
<dbReference type="InterPro" id="IPR029034">
    <property type="entry name" value="Cystine-knot_cytokine"/>
</dbReference>
<dbReference type="InterPro" id="IPR020408">
    <property type="entry name" value="Nerve_growth_factor-like"/>
</dbReference>
<dbReference type="InterPro" id="IPR002072">
    <property type="entry name" value="Nerve_growth_factor-rel"/>
</dbReference>
<dbReference type="InterPro" id="IPR020425">
    <property type="entry name" value="Nerve_growth_factor_bsu"/>
</dbReference>
<dbReference type="InterPro" id="IPR020437">
    <property type="entry name" value="Nerve_growth_factor_bsu_mml"/>
</dbReference>
<dbReference type="InterPro" id="IPR019846">
    <property type="entry name" value="Nerve_growth_factor_CS"/>
</dbReference>
<dbReference type="PANTHER" id="PTHR11589:SF10">
    <property type="entry name" value="BETA-NERVE GROWTH FACTOR"/>
    <property type="match status" value="1"/>
</dbReference>
<dbReference type="PANTHER" id="PTHR11589">
    <property type="entry name" value="NERVE GROWTH FACTOR NGF -RELATED"/>
    <property type="match status" value="1"/>
</dbReference>
<dbReference type="Pfam" id="PF00243">
    <property type="entry name" value="NGF"/>
    <property type="match status" value="1"/>
</dbReference>
<dbReference type="PIRSF" id="PIRSF001789">
    <property type="entry name" value="NGF"/>
    <property type="match status" value="1"/>
</dbReference>
<dbReference type="PRINTS" id="PR01925">
    <property type="entry name" value="MAMLNGFBETA"/>
</dbReference>
<dbReference type="PRINTS" id="PR00268">
    <property type="entry name" value="NGF"/>
</dbReference>
<dbReference type="PRINTS" id="PR01913">
    <property type="entry name" value="NGFBETA"/>
</dbReference>
<dbReference type="SMART" id="SM00140">
    <property type="entry name" value="NGF"/>
    <property type="match status" value="1"/>
</dbReference>
<dbReference type="SUPFAM" id="SSF57501">
    <property type="entry name" value="Cystine-knot cytokines"/>
    <property type="match status" value="1"/>
</dbReference>
<dbReference type="PROSITE" id="PS00248">
    <property type="entry name" value="NGF_1"/>
    <property type="match status" value="1"/>
</dbReference>
<dbReference type="PROSITE" id="PS50270">
    <property type="entry name" value="NGF_2"/>
    <property type="match status" value="1"/>
</dbReference>
<feature type="signal peptide" evidence="4">
    <location>
        <begin position="1"/>
        <end position="18"/>
    </location>
</feature>
<feature type="propeptide" id="PRO_0000277876" evidence="1">
    <location>
        <begin position="19"/>
        <end position="121"/>
    </location>
</feature>
<feature type="chain" id="PRO_0000277877" description="Beta-nerve growth factor">
    <location>
        <begin position="122"/>
        <end position="241"/>
    </location>
</feature>
<feature type="glycosylation site" description="N-linked (GlcNAc...) asparagine" evidence="4">
    <location>
        <position position="69"/>
    </location>
</feature>
<feature type="glycosylation site" description="N-linked (GlcNAc...) asparagine" evidence="4">
    <location>
        <position position="114"/>
    </location>
</feature>
<feature type="glycosylation site" description="N-linked (GlcNAc...) asparagine" evidence="4">
    <location>
        <position position="166"/>
    </location>
</feature>
<feature type="disulfide bond" evidence="2">
    <location>
        <begin position="136"/>
        <end position="201"/>
    </location>
</feature>
<feature type="disulfide bond" evidence="2">
    <location>
        <begin position="179"/>
        <end position="229"/>
    </location>
</feature>
<feature type="disulfide bond" evidence="2">
    <location>
        <begin position="189"/>
        <end position="231"/>
    </location>
</feature>
<comment type="function">
    <text evidence="2">Nerve growth factor is important for the development and maintenance of the sympathetic and sensory nervous systems. Extracellular ligand for the NTRK1 and NGFR receptors, activates cellular signaling cascades through those receptor tyrosine kinase to regulate neuronal proliferation, differentiation and survival. Inhibits metalloproteinase dependent proteolysis of platelet glycoprotein VI.</text>
</comment>
<comment type="subunit">
    <text evidence="2 3">Homodimer. The homodimer interacts with a single NTRK1 chain. The homodimer interacts with a single NGFR chain (By similarity). The NGF dimer interacts with a single SORCS2 chain (via extracellular domain). The NGF precursor (proNGF) binds to a receptor complex formed by SORT1 and NGFR, which leads to NGF endocytosis. Both mature NGF and the immature NGF precursor (proNGF) interact with SORCS2 and with the heterodimer formed by SORCS2 and NGFR (via extracellular domains). The NGF precursor (proNGF) has much higher affinity for SORCS2 than mature NGF. The NGF precursor (proNGF) has much higher affinity for SORT1 than mature NGF (By similarity). Interacts with ADAM10 in a divalent cation-dependent manner (By similarity). Interacts with SORCS3 (By similarity).</text>
</comment>
<comment type="subcellular location">
    <subcellularLocation>
        <location evidence="2">Secreted</location>
    </subcellularLocation>
    <subcellularLocation>
        <location evidence="3">Endosome lumen</location>
    </subcellularLocation>
    <text evidence="3">ProNGF is endocytosed after binding to the cell surface receptor formed by SORT1 and NGFR.</text>
</comment>
<comment type="similarity">
    <text evidence="5">Belongs to the NGF-beta family.</text>
</comment>
<comment type="sequence caution" evidence="5">
    <conflict type="erroneous initiation">
        <sequence resource="EMBL-CDS" id="AAV74256"/>
    </conflict>
    <text>Extended N-terminus.</text>
</comment>
<proteinExistence type="evidence at transcript level"/>
<accession>Q5ISB0</accession>
<sequence length="241" mass="26838">MSMLFYTLITAFLIGIQAEPHSESNVPAGHTIPQAHWTKLQHSLDTALRRARSAPAGPIAARVAGQTRNITVDPKLFKKRRLRSPRVLFSTQPPPEAADTQDLDFEVAGAAPVNRTHRSKRSSSHPIFHRGEFSVCDSVSVWVGDKTTATDIKGKEVMVLGEVNINNSVFKQYFFETKCRDPNPVDSGCRGIDSKHWNSYCTTTHTFVKALTMDGKQAAWRFIRIDTACVCVLSRKASRRA</sequence>
<organism>
    <name type="scientific">Saimiri boliviensis boliviensis</name>
    <name type="common">Bolivian squirrel monkey</name>
    <dbReference type="NCBI Taxonomy" id="39432"/>
    <lineage>
        <taxon>Eukaryota</taxon>
        <taxon>Metazoa</taxon>
        <taxon>Chordata</taxon>
        <taxon>Craniata</taxon>
        <taxon>Vertebrata</taxon>
        <taxon>Euteleostomi</taxon>
        <taxon>Mammalia</taxon>
        <taxon>Eutheria</taxon>
        <taxon>Euarchontoglires</taxon>
        <taxon>Primates</taxon>
        <taxon>Haplorrhini</taxon>
        <taxon>Platyrrhini</taxon>
        <taxon>Cebidae</taxon>
        <taxon>Saimiriinae</taxon>
        <taxon>Saimiri</taxon>
    </lineage>
</organism>
<evidence type="ECO:0000250" key="1"/>
<evidence type="ECO:0000250" key="2">
    <source>
        <dbReference type="UniProtKB" id="P01138"/>
    </source>
</evidence>
<evidence type="ECO:0000250" key="3">
    <source>
        <dbReference type="UniProtKB" id="P01139"/>
    </source>
</evidence>
<evidence type="ECO:0000255" key="4"/>
<evidence type="ECO:0000305" key="5"/>
<keyword id="KW-0165">Cleavage on pair of basic residues</keyword>
<keyword id="KW-1015">Disulfide bond</keyword>
<keyword id="KW-0967">Endosome</keyword>
<keyword id="KW-0325">Glycoprotein</keyword>
<keyword id="KW-0339">Growth factor</keyword>
<keyword id="KW-0481">Metalloenzyme inhibitor</keyword>
<keyword id="KW-0483">Metalloprotease inhibitor</keyword>
<keyword id="KW-0646">Protease inhibitor</keyword>
<keyword id="KW-1185">Reference proteome</keyword>
<keyword id="KW-0964">Secreted</keyword>
<keyword id="KW-0732">Signal</keyword>
<protein>
    <recommendedName>
        <fullName>Beta-nerve growth factor</fullName>
        <shortName>Beta-NGF</shortName>
    </recommendedName>
</protein>
<name>NGF_SAIBB</name>
<reference key="1">
    <citation type="journal article" date="2004" name="Cell">
        <title>Accelerated evolution of nervous system genes in the origin of Homo sapiens.</title>
        <authorList>
            <person name="Dorus S."/>
            <person name="Vallender E.J."/>
            <person name="Evans P.D."/>
            <person name="Anderson J.R."/>
            <person name="Gilbert S.L."/>
            <person name="Mahowald M."/>
            <person name="Wyckoff G.J."/>
            <person name="Malcom C.M."/>
            <person name="Lahn B.T."/>
        </authorList>
    </citation>
    <scope>NUCLEOTIDE SEQUENCE [MRNA]</scope>
    <source>
        <tissue>Brain</tissue>
    </source>
</reference>